<sequence>MYGNWGRFLRVNLSTGEVKVEEYGEELAKKWLGSRGLAIYLLLKEMDPKADPLGPENKLIITPGPLTGTSAPTGGRYNVVTKSPQTGFITMANSGGYFGAELKFAGWDAIVVEGQSEKPVYIYIKDDHVEIRDASHLWGKVVSETEAAIKKEIGSNKLHIASIGPAGENLVKFAAIMNDGHRAAGRAGVGAVMGSKKLKAIAVEGSKRVPIADKQKFMLVVREKINKLRNDPVAGGGLPKYGTAVLVNIINENGLYPTRNFQTGVFEHAYEQSGEAMTAKYLIRNQPCYACPIGCGRVNKLPTLGVTEGPEYESIWALGANLGINDLASIIEANHQCDEFGLDTISTGGTLAAAMELYEKGYLTDDELGDAPPFRWGNTEVLHYYIEKIAYRKDLGDKLAEGSYRFAEMYGHPEFSMSVKKLELPAYDPRGAEGHGLGYATNNRGGCHIKNYMISPEILGYPYKMDPHDISDEKVKMLILFQDLSALIDAAGLCLFTTFGLGADDYRDMLNAALGWDFSTEDYLKIGERIWNAERLFNLKAGLDPAKDETLPKRFLEEPMPEGPNKGHVVRLKEMLPRYYKLRGWTEDGRIPREKAEELGIAEFL</sequence>
<reference key="1">
    <citation type="journal article" date="2005" name="Genome Res.">
        <title>Complete genome sequence of the hyperthermophilic archaeon Thermococcus kodakaraensis KOD1 and comparison with Pyrococcus genomes.</title>
        <authorList>
            <person name="Fukui T."/>
            <person name="Atomi H."/>
            <person name="Kanai T."/>
            <person name="Matsumi R."/>
            <person name="Fujiwara S."/>
            <person name="Imanaka T."/>
        </authorList>
    </citation>
    <scope>NUCLEOTIDE SEQUENCE [LARGE SCALE GENOMIC DNA]</scope>
    <source>
        <strain>ATCC BAA-918 / JCM 12380 / KOD1</strain>
    </source>
</reference>
<dbReference type="EC" id="1.2.7.5" evidence="1"/>
<dbReference type="EMBL" id="AP006878">
    <property type="protein sequence ID" value="BAD85255.1"/>
    <property type="molecule type" value="Genomic_DNA"/>
</dbReference>
<dbReference type="RefSeq" id="WP_011250017.1">
    <property type="nucleotide sequence ID" value="NC_006624.1"/>
</dbReference>
<dbReference type="SMR" id="Q5JE15"/>
<dbReference type="STRING" id="69014.TK1066"/>
<dbReference type="EnsemblBacteria" id="BAD85255">
    <property type="protein sequence ID" value="BAD85255"/>
    <property type="gene ID" value="TK1066"/>
</dbReference>
<dbReference type="GeneID" id="78447579"/>
<dbReference type="KEGG" id="tko:TK1066"/>
<dbReference type="PATRIC" id="fig|69014.16.peg.1042"/>
<dbReference type="eggNOG" id="arCOG00706">
    <property type="taxonomic scope" value="Archaea"/>
</dbReference>
<dbReference type="HOGENOM" id="CLU_020364_1_0_2"/>
<dbReference type="InParanoid" id="Q5JE15"/>
<dbReference type="OrthoDB" id="30771at2157"/>
<dbReference type="PhylomeDB" id="Q5JE15"/>
<dbReference type="Proteomes" id="UP000000536">
    <property type="component" value="Chromosome"/>
</dbReference>
<dbReference type="GO" id="GO:0051539">
    <property type="term" value="F:4 iron, 4 sulfur cluster binding"/>
    <property type="evidence" value="ECO:0007669"/>
    <property type="project" value="UniProtKB-KW"/>
</dbReference>
<dbReference type="GO" id="GO:0033726">
    <property type="term" value="F:aldehyde ferredoxin oxidoreductase activity"/>
    <property type="evidence" value="ECO:0007669"/>
    <property type="project" value="UniProtKB-EC"/>
</dbReference>
<dbReference type="GO" id="GO:0009055">
    <property type="term" value="F:electron transfer activity"/>
    <property type="evidence" value="ECO:0007669"/>
    <property type="project" value="InterPro"/>
</dbReference>
<dbReference type="GO" id="GO:0046872">
    <property type="term" value="F:metal ion binding"/>
    <property type="evidence" value="ECO:0007669"/>
    <property type="project" value="UniProtKB-KW"/>
</dbReference>
<dbReference type="Gene3D" id="1.10.569.10">
    <property type="entry name" value="Aldehyde Ferredoxin Oxidoreductase Protein, subunit A, domain 2"/>
    <property type="match status" value="1"/>
</dbReference>
<dbReference type="Gene3D" id="1.10.599.10">
    <property type="entry name" value="Aldehyde Ferredoxin Oxidoreductase Protein, subunit A, domain 3"/>
    <property type="match status" value="1"/>
</dbReference>
<dbReference type="Gene3D" id="3.60.9.10">
    <property type="entry name" value="Aldehyde ferredoxin oxidoreductase, N-terminal domain"/>
    <property type="match status" value="1"/>
</dbReference>
<dbReference type="InterPro" id="IPR013984">
    <property type="entry name" value="Ald_Fedxn_OxRdtase_dom2"/>
</dbReference>
<dbReference type="InterPro" id="IPR013985">
    <property type="entry name" value="Ald_Fedxn_OxRdtase_dom3"/>
</dbReference>
<dbReference type="InterPro" id="IPR013983">
    <property type="entry name" value="Ald_Fedxn_OxRdtase_N"/>
</dbReference>
<dbReference type="InterPro" id="IPR036503">
    <property type="entry name" value="Ald_Fedxn_OxRdtase_N_sf"/>
</dbReference>
<dbReference type="InterPro" id="IPR001203">
    <property type="entry name" value="OxRdtase_Ald_Fedxn_C"/>
</dbReference>
<dbReference type="InterPro" id="IPR036021">
    <property type="entry name" value="Tungsten_al_ferr_oxy-like_C"/>
</dbReference>
<dbReference type="InterPro" id="IPR051919">
    <property type="entry name" value="W-dependent_AOR"/>
</dbReference>
<dbReference type="PANTHER" id="PTHR30038">
    <property type="entry name" value="ALDEHYDE FERREDOXIN OXIDOREDUCTASE"/>
    <property type="match status" value="1"/>
</dbReference>
<dbReference type="PANTHER" id="PTHR30038:SF0">
    <property type="entry name" value="TUNGSTEN-CONTAINING ALDEHYDE FERREDOXIN OXIDOREDUCTASE"/>
    <property type="match status" value="1"/>
</dbReference>
<dbReference type="Pfam" id="PF01314">
    <property type="entry name" value="AFOR_C"/>
    <property type="match status" value="1"/>
</dbReference>
<dbReference type="Pfam" id="PF02730">
    <property type="entry name" value="AFOR_N"/>
    <property type="match status" value="1"/>
</dbReference>
<dbReference type="SMART" id="SM00790">
    <property type="entry name" value="AFOR_N"/>
    <property type="match status" value="1"/>
</dbReference>
<dbReference type="SUPFAM" id="SSF48310">
    <property type="entry name" value="Aldehyde ferredoxin oxidoreductase, C-terminal domains"/>
    <property type="match status" value="1"/>
</dbReference>
<dbReference type="SUPFAM" id="SSF56228">
    <property type="entry name" value="Aldehyde ferredoxin oxidoreductase, N-terminal domain"/>
    <property type="match status" value="1"/>
</dbReference>
<proteinExistence type="inferred from homology"/>
<protein>
    <recommendedName>
        <fullName evidence="1">Tungsten-containing aldehyde ferredoxin oxidoreductase</fullName>
        <ecNumber evidence="1">1.2.7.5</ecNumber>
    </recommendedName>
</protein>
<feature type="chain" id="PRO_0000064608" description="Tungsten-containing aldehyde ferredoxin oxidoreductase">
    <location>
        <begin position="1"/>
        <end position="605"/>
    </location>
</feature>
<feature type="binding site" evidence="1">
    <location>
        <position position="76"/>
    </location>
    <ligand>
        <name>tungstopterin</name>
        <dbReference type="ChEBI" id="CHEBI:30402"/>
    </ligand>
</feature>
<feature type="binding site" evidence="1">
    <location>
        <position position="93"/>
    </location>
    <ligand>
        <name>tungstopterin</name>
        <dbReference type="ChEBI" id="CHEBI:30402"/>
    </ligand>
</feature>
<feature type="binding site" evidence="1">
    <location>
        <position position="95"/>
    </location>
    <ligand>
        <name>tungstopterin</name>
        <dbReference type="ChEBI" id="CHEBI:30402"/>
    </ligand>
</feature>
<feature type="binding site" evidence="1">
    <location>
        <position position="182"/>
    </location>
    <ligand>
        <name>tungstopterin</name>
        <dbReference type="ChEBI" id="CHEBI:30402"/>
    </ligand>
</feature>
<feature type="binding site" evidence="1">
    <location>
        <position position="183"/>
    </location>
    <ligand>
        <name>tungstopterin</name>
        <dbReference type="ChEBI" id="CHEBI:30402"/>
    </ligand>
</feature>
<feature type="binding site" evidence="1">
    <location>
        <position position="185"/>
    </location>
    <ligand>
        <name>tungstopterin</name>
        <dbReference type="ChEBI" id="CHEBI:30402"/>
    </ligand>
</feature>
<feature type="binding site" evidence="1">
    <location>
        <position position="186"/>
    </location>
    <ligand>
        <name>tungstopterin</name>
        <dbReference type="ChEBI" id="CHEBI:30402"/>
    </ligand>
</feature>
<feature type="binding site" evidence="1">
    <location>
        <position position="288"/>
    </location>
    <ligand>
        <name>[4Fe-4S] cluster</name>
        <dbReference type="ChEBI" id="CHEBI:49883"/>
    </ligand>
</feature>
<feature type="binding site" evidence="1">
    <location>
        <position position="291"/>
    </location>
    <ligand>
        <name>[4Fe-4S] cluster</name>
        <dbReference type="ChEBI" id="CHEBI:49883"/>
    </ligand>
</feature>
<feature type="binding site" evidence="1">
    <location>
        <position position="295"/>
    </location>
    <ligand>
        <name>[4Fe-4S] cluster</name>
        <dbReference type="ChEBI" id="CHEBI:49883"/>
    </ligand>
</feature>
<feature type="binding site" evidence="1">
    <location>
        <position position="338"/>
    </location>
    <ligand>
        <name>tungstopterin</name>
        <dbReference type="ChEBI" id="CHEBI:30402"/>
    </ligand>
</feature>
<feature type="binding site" evidence="1">
    <location>
        <position position="342"/>
    </location>
    <ligand>
        <name>tungstopterin</name>
        <dbReference type="ChEBI" id="CHEBI:30402"/>
    </ligand>
</feature>
<feature type="binding site" evidence="1">
    <location>
        <position position="343"/>
    </location>
    <ligand>
        <name>tungstopterin</name>
        <dbReference type="ChEBI" id="CHEBI:30402"/>
    </ligand>
</feature>
<feature type="binding site" evidence="1">
    <location>
        <position position="444"/>
    </location>
    <ligand>
        <name>tungstopterin</name>
        <dbReference type="ChEBI" id="CHEBI:30402"/>
    </ligand>
</feature>
<feature type="binding site" evidence="1">
    <location>
        <position position="450"/>
    </location>
    <ligand>
        <name>tungstopterin</name>
        <dbReference type="ChEBI" id="CHEBI:30402"/>
    </ligand>
</feature>
<feature type="binding site" evidence="1">
    <location>
        <position position="489"/>
    </location>
    <ligand>
        <name>tungstopterin</name>
        <dbReference type="ChEBI" id="CHEBI:30402"/>
    </ligand>
</feature>
<feature type="binding site" evidence="1">
    <location>
        <position position="493"/>
    </location>
    <ligand>
        <name>tungstopterin</name>
        <dbReference type="ChEBI" id="CHEBI:30402"/>
    </ligand>
</feature>
<feature type="binding site" evidence="1">
    <location>
        <position position="494"/>
    </location>
    <ligand>
        <name>[4Fe-4S] cluster</name>
        <dbReference type="ChEBI" id="CHEBI:49883"/>
    </ligand>
</feature>
<feature type="binding site" evidence="1">
    <location>
        <position position="495"/>
    </location>
    <ligand>
        <name>tungstopterin</name>
        <dbReference type="ChEBI" id="CHEBI:30402"/>
    </ligand>
</feature>
<keyword id="KW-0004">4Fe-4S</keyword>
<keyword id="KW-0408">Iron</keyword>
<keyword id="KW-0411">Iron-sulfur</keyword>
<keyword id="KW-0479">Metal-binding</keyword>
<keyword id="KW-0560">Oxidoreductase</keyword>
<keyword id="KW-1185">Reference proteome</keyword>
<keyword id="KW-0826">Tungsten</keyword>
<name>AOR_THEKO</name>
<comment type="catalytic activity">
    <reaction evidence="1">
        <text>an aldehyde + 2 oxidized [2Fe-2S]-[ferredoxin] + H2O = a carboxylate + 2 reduced [2Fe-2S]-[ferredoxin] + 3 H(+)</text>
        <dbReference type="Rhea" id="RHEA:16421"/>
        <dbReference type="Rhea" id="RHEA-COMP:10000"/>
        <dbReference type="Rhea" id="RHEA-COMP:10001"/>
        <dbReference type="ChEBI" id="CHEBI:15377"/>
        <dbReference type="ChEBI" id="CHEBI:15378"/>
        <dbReference type="ChEBI" id="CHEBI:17478"/>
        <dbReference type="ChEBI" id="CHEBI:29067"/>
        <dbReference type="ChEBI" id="CHEBI:33737"/>
        <dbReference type="ChEBI" id="CHEBI:33738"/>
        <dbReference type="EC" id="1.2.7.5"/>
    </reaction>
</comment>
<comment type="cofactor">
    <cofactor evidence="1">
        <name>[4Fe-4S] cluster</name>
        <dbReference type="ChEBI" id="CHEBI:49883"/>
    </cofactor>
    <text evidence="1">Binds 1 [4Fe-4S] cluster per subunit.</text>
</comment>
<comment type="cofactor">
    <cofactor evidence="1">
        <name>tungstopterin</name>
        <dbReference type="ChEBI" id="CHEBI:30402"/>
    </cofactor>
    <text evidence="1">Binds 1 tungstopterin cofactor per subunit.</text>
</comment>
<comment type="subunit">
    <text evidence="1">Homodimer.</text>
</comment>
<comment type="similarity">
    <text evidence="2">Belongs to the AOR/FOR family.</text>
</comment>
<gene>
    <name type="primary">aor</name>
    <name type="ordered locus">TK1066</name>
</gene>
<accession>Q5JE15</accession>
<evidence type="ECO:0000250" key="1">
    <source>
        <dbReference type="UniProtKB" id="Q51739"/>
    </source>
</evidence>
<evidence type="ECO:0000305" key="2"/>
<organism>
    <name type="scientific">Thermococcus kodakarensis (strain ATCC BAA-918 / JCM 12380 / KOD1)</name>
    <name type="common">Pyrococcus kodakaraensis (strain KOD1)</name>
    <dbReference type="NCBI Taxonomy" id="69014"/>
    <lineage>
        <taxon>Archaea</taxon>
        <taxon>Methanobacteriati</taxon>
        <taxon>Methanobacteriota</taxon>
        <taxon>Thermococci</taxon>
        <taxon>Thermococcales</taxon>
        <taxon>Thermococcaceae</taxon>
        <taxon>Thermococcus</taxon>
    </lineage>
</organism>